<accession>Q0AE87</accession>
<evidence type="ECO:0000255" key="1">
    <source>
        <dbReference type="HAMAP-Rule" id="MF_00818"/>
    </source>
</evidence>
<gene>
    <name evidence="1" type="primary">queF</name>
    <name type="ordered locus">Neut_2123</name>
</gene>
<organism>
    <name type="scientific">Nitrosomonas eutropha (strain DSM 101675 / C91 / Nm57)</name>
    <dbReference type="NCBI Taxonomy" id="335283"/>
    <lineage>
        <taxon>Bacteria</taxon>
        <taxon>Pseudomonadati</taxon>
        <taxon>Pseudomonadota</taxon>
        <taxon>Betaproteobacteria</taxon>
        <taxon>Nitrosomonadales</taxon>
        <taxon>Nitrosomonadaceae</taxon>
        <taxon>Nitrosomonas</taxon>
    </lineage>
</organism>
<protein>
    <recommendedName>
        <fullName evidence="1">NADPH-dependent 7-cyano-7-deazaguanine reductase</fullName>
        <ecNumber evidence="1">1.7.1.13</ecNumber>
    </recommendedName>
    <alternativeName>
        <fullName evidence="1">7-cyano-7-carbaguanine reductase</fullName>
    </alternativeName>
    <alternativeName>
        <fullName evidence="1">NADPH-dependent nitrile oxidoreductase</fullName>
    </alternativeName>
    <alternativeName>
        <fullName evidence="1">PreQ(0) reductase</fullName>
    </alternativeName>
</protein>
<feature type="chain" id="PRO_1000062396" description="NADPH-dependent 7-cyano-7-deazaguanine reductase">
    <location>
        <begin position="1"/>
        <end position="139"/>
    </location>
</feature>
<feature type="active site" description="Thioimide intermediate" evidence="1">
    <location>
        <position position="34"/>
    </location>
</feature>
<feature type="active site" description="Proton donor" evidence="1">
    <location>
        <position position="41"/>
    </location>
</feature>
<feature type="binding site" evidence="1">
    <location>
        <begin position="56"/>
        <end position="58"/>
    </location>
    <ligand>
        <name>substrate</name>
    </ligand>
</feature>
<feature type="binding site" evidence="1">
    <location>
        <begin position="75"/>
        <end position="76"/>
    </location>
    <ligand>
        <name>substrate</name>
    </ligand>
</feature>
<name>QUEF_NITEC</name>
<reference key="1">
    <citation type="journal article" date="2007" name="Environ. Microbiol.">
        <title>Whole-genome analysis of the ammonia-oxidizing bacterium, Nitrosomonas eutropha C91: implications for niche adaptation.</title>
        <authorList>
            <person name="Stein L.Y."/>
            <person name="Arp D.J."/>
            <person name="Berube P.M."/>
            <person name="Chain P.S."/>
            <person name="Hauser L."/>
            <person name="Jetten M.S."/>
            <person name="Klotz M.G."/>
            <person name="Larimer F.W."/>
            <person name="Norton J.M."/>
            <person name="Op den Camp H.J.M."/>
            <person name="Shin M."/>
            <person name="Wei X."/>
        </authorList>
    </citation>
    <scope>NUCLEOTIDE SEQUENCE [LARGE SCALE GENOMIC DNA]</scope>
    <source>
        <strain>DSM 101675 / C91 / Nm57</strain>
    </source>
</reference>
<comment type="function">
    <text evidence="1">Catalyzes the NADPH-dependent reduction of 7-cyano-7-deazaguanine (preQ0) to 7-aminomethyl-7-deazaguanine (preQ1).</text>
</comment>
<comment type="catalytic activity">
    <reaction evidence="1">
        <text>7-aminomethyl-7-carbaguanine + 2 NADP(+) = 7-cyano-7-deazaguanine + 2 NADPH + 3 H(+)</text>
        <dbReference type="Rhea" id="RHEA:13409"/>
        <dbReference type="ChEBI" id="CHEBI:15378"/>
        <dbReference type="ChEBI" id="CHEBI:45075"/>
        <dbReference type="ChEBI" id="CHEBI:57783"/>
        <dbReference type="ChEBI" id="CHEBI:58349"/>
        <dbReference type="ChEBI" id="CHEBI:58703"/>
        <dbReference type="EC" id="1.7.1.13"/>
    </reaction>
</comment>
<comment type="pathway">
    <text evidence="1">tRNA modification; tRNA-queuosine biosynthesis.</text>
</comment>
<comment type="subcellular location">
    <subcellularLocation>
        <location evidence="1">Cytoplasm</location>
    </subcellularLocation>
</comment>
<comment type="similarity">
    <text evidence="1">Belongs to the GTP cyclohydrolase I family. QueF type 1 subfamily.</text>
</comment>
<keyword id="KW-0963">Cytoplasm</keyword>
<keyword id="KW-0521">NADP</keyword>
<keyword id="KW-0560">Oxidoreductase</keyword>
<keyword id="KW-0671">Queuosine biosynthesis</keyword>
<proteinExistence type="inferred from homology"/>
<dbReference type="EC" id="1.7.1.13" evidence="1"/>
<dbReference type="EMBL" id="CP000450">
    <property type="protein sequence ID" value="ABI60345.1"/>
    <property type="molecule type" value="Genomic_DNA"/>
</dbReference>
<dbReference type="RefSeq" id="WP_011635142.1">
    <property type="nucleotide sequence ID" value="NC_008344.1"/>
</dbReference>
<dbReference type="SMR" id="Q0AE87"/>
<dbReference type="STRING" id="335283.Neut_2123"/>
<dbReference type="KEGG" id="net:Neut_2123"/>
<dbReference type="eggNOG" id="COG0780">
    <property type="taxonomic scope" value="Bacteria"/>
</dbReference>
<dbReference type="HOGENOM" id="CLU_102489_1_0_4"/>
<dbReference type="OrthoDB" id="9789995at2"/>
<dbReference type="UniPathway" id="UPA00392"/>
<dbReference type="Proteomes" id="UP000001966">
    <property type="component" value="Chromosome"/>
</dbReference>
<dbReference type="GO" id="GO:0005737">
    <property type="term" value="C:cytoplasm"/>
    <property type="evidence" value="ECO:0007669"/>
    <property type="project" value="UniProtKB-SubCell"/>
</dbReference>
<dbReference type="GO" id="GO:0033739">
    <property type="term" value="F:preQ1 synthase activity"/>
    <property type="evidence" value="ECO:0007669"/>
    <property type="project" value="UniProtKB-UniRule"/>
</dbReference>
<dbReference type="GO" id="GO:0008616">
    <property type="term" value="P:queuosine biosynthetic process"/>
    <property type="evidence" value="ECO:0007669"/>
    <property type="project" value="UniProtKB-UniRule"/>
</dbReference>
<dbReference type="GO" id="GO:0006400">
    <property type="term" value="P:tRNA modification"/>
    <property type="evidence" value="ECO:0007669"/>
    <property type="project" value="UniProtKB-UniRule"/>
</dbReference>
<dbReference type="Gene3D" id="3.30.1130.10">
    <property type="match status" value="1"/>
</dbReference>
<dbReference type="HAMAP" id="MF_00818">
    <property type="entry name" value="QueF_type1"/>
    <property type="match status" value="1"/>
</dbReference>
<dbReference type="InterPro" id="IPR043133">
    <property type="entry name" value="GTP-CH-I_C/QueF"/>
</dbReference>
<dbReference type="InterPro" id="IPR050084">
    <property type="entry name" value="NADPH_dep_7-cyano-7-deazaG_red"/>
</dbReference>
<dbReference type="InterPro" id="IPR029500">
    <property type="entry name" value="QueF"/>
</dbReference>
<dbReference type="InterPro" id="IPR016856">
    <property type="entry name" value="QueF_type1"/>
</dbReference>
<dbReference type="NCBIfam" id="TIGR03139">
    <property type="entry name" value="QueF-II"/>
    <property type="match status" value="1"/>
</dbReference>
<dbReference type="PANTHER" id="PTHR34354">
    <property type="entry name" value="NADPH-DEPENDENT 7-CYANO-7-DEAZAGUANINE REDUCTASE"/>
    <property type="match status" value="1"/>
</dbReference>
<dbReference type="PANTHER" id="PTHR34354:SF1">
    <property type="entry name" value="NADPH-DEPENDENT 7-CYANO-7-DEAZAGUANINE REDUCTASE"/>
    <property type="match status" value="1"/>
</dbReference>
<dbReference type="Pfam" id="PF14489">
    <property type="entry name" value="QueF"/>
    <property type="match status" value="1"/>
</dbReference>
<dbReference type="PIRSF" id="PIRSF027377">
    <property type="entry name" value="Nitrile_oxidored_QueF"/>
    <property type="match status" value="1"/>
</dbReference>
<dbReference type="SUPFAM" id="SSF55620">
    <property type="entry name" value="Tetrahydrobiopterin biosynthesis enzymes-like"/>
    <property type="match status" value="1"/>
</dbReference>
<sequence length="139" mass="16429">MTTQPSKQLETFENPIQTRDYRIHMEIPEFTCLCPKTGQPDFARLTLDYIPDKKCIELKSLKLYIWSYRNEGTFHEAVTNQILDDLVIAMKPRFIRLTSKFYVRGGIFTNVVAEHRKKGWHPQPPVFLESFDEQFNTRS</sequence>